<evidence type="ECO:0000255" key="1">
    <source>
        <dbReference type="HAMAP-Rule" id="MF_01345"/>
    </source>
</evidence>
<evidence type="ECO:0000305" key="2"/>
<keyword id="KW-1185">Reference proteome</keyword>
<keyword id="KW-0687">Ribonucleoprotein</keyword>
<keyword id="KW-0689">Ribosomal protein</keyword>
<keyword id="KW-0694">RNA-binding</keyword>
<keyword id="KW-0699">rRNA-binding</keyword>
<sequence length="88" mass="10109">MERINTRKALVGSVVSSVNDKTIIVAVDIYKKHPIYSKRFKKTKRFAAHDEQNKAKIGDIVKIIETRPISKTKKFRLDKIIELAKEGN</sequence>
<proteinExistence type="inferred from homology"/>
<comment type="function">
    <text evidence="1">One of the primary rRNA binding proteins, it binds specifically to the 5'-end of 16S ribosomal RNA.</text>
</comment>
<comment type="subunit">
    <text evidence="1">Part of the 30S ribosomal subunit.</text>
</comment>
<comment type="similarity">
    <text evidence="1">Belongs to the universal ribosomal protein uS17 family.</text>
</comment>
<organism>
    <name type="scientific">Mycoplasmopsis pulmonis (strain UAB CTIP)</name>
    <name type="common">Mycoplasma pulmonis</name>
    <dbReference type="NCBI Taxonomy" id="272635"/>
    <lineage>
        <taxon>Bacteria</taxon>
        <taxon>Bacillati</taxon>
        <taxon>Mycoplasmatota</taxon>
        <taxon>Mycoplasmoidales</taxon>
        <taxon>Metamycoplasmataceae</taxon>
        <taxon>Mycoplasmopsis</taxon>
    </lineage>
</organism>
<accession>Q98PZ1</accession>
<gene>
    <name evidence="1" type="primary">rpsQ</name>
    <name type="ordered locus">MYPU_5780</name>
</gene>
<dbReference type="EMBL" id="AL445565">
    <property type="protein sequence ID" value="CAC13751.1"/>
    <property type="molecule type" value="Genomic_DNA"/>
</dbReference>
<dbReference type="PIR" id="B90584">
    <property type="entry name" value="B90584"/>
</dbReference>
<dbReference type="RefSeq" id="WP_010925379.1">
    <property type="nucleotide sequence ID" value="NC_002771.1"/>
</dbReference>
<dbReference type="SMR" id="Q98PZ1"/>
<dbReference type="STRING" id="272635.gene:17577185"/>
<dbReference type="KEGG" id="mpu:MYPU_5780"/>
<dbReference type="eggNOG" id="COG0186">
    <property type="taxonomic scope" value="Bacteria"/>
</dbReference>
<dbReference type="HOGENOM" id="CLU_073626_1_0_14"/>
<dbReference type="BioCyc" id="MPUL272635:G1GT6-591-MONOMER"/>
<dbReference type="Proteomes" id="UP000000528">
    <property type="component" value="Chromosome"/>
</dbReference>
<dbReference type="GO" id="GO:0022627">
    <property type="term" value="C:cytosolic small ribosomal subunit"/>
    <property type="evidence" value="ECO:0007669"/>
    <property type="project" value="TreeGrafter"/>
</dbReference>
<dbReference type="GO" id="GO:0019843">
    <property type="term" value="F:rRNA binding"/>
    <property type="evidence" value="ECO:0007669"/>
    <property type="project" value="UniProtKB-UniRule"/>
</dbReference>
<dbReference type="GO" id="GO:0003735">
    <property type="term" value="F:structural constituent of ribosome"/>
    <property type="evidence" value="ECO:0007669"/>
    <property type="project" value="InterPro"/>
</dbReference>
<dbReference type="GO" id="GO:0006412">
    <property type="term" value="P:translation"/>
    <property type="evidence" value="ECO:0007669"/>
    <property type="project" value="UniProtKB-UniRule"/>
</dbReference>
<dbReference type="CDD" id="cd00364">
    <property type="entry name" value="Ribosomal_uS17"/>
    <property type="match status" value="1"/>
</dbReference>
<dbReference type="Gene3D" id="2.40.50.140">
    <property type="entry name" value="Nucleic acid-binding proteins"/>
    <property type="match status" value="1"/>
</dbReference>
<dbReference type="HAMAP" id="MF_01345_B">
    <property type="entry name" value="Ribosomal_uS17_B"/>
    <property type="match status" value="1"/>
</dbReference>
<dbReference type="InterPro" id="IPR012340">
    <property type="entry name" value="NA-bd_OB-fold"/>
</dbReference>
<dbReference type="InterPro" id="IPR000266">
    <property type="entry name" value="Ribosomal_uS17"/>
</dbReference>
<dbReference type="InterPro" id="IPR019984">
    <property type="entry name" value="Ribosomal_uS17_bact/chlr"/>
</dbReference>
<dbReference type="InterPro" id="IPR019979">
    <property type="entry name" value="Ribosomal_uS17_CS"/>
</dbReference>
<dbReference type="NCBIfam" id="NF004123">
    <property type="entry name" value="PRK05610.1"/>
    <property type="match status" value="1"/>
</dbReference>
<dbReference type="NCBIfam" id="TIGR03635">
    <property type="entry name" value="uS17_bact"/>
    <property type="match status" value="1"/>
</dbReference>
<dbReference type="PANTHER" id="PTHR10744">
    <property type="entry name" value="40S RIBOSOMAL PROTEIN S11 FAMILY MEMBER"/>
    <property type="match status" value="1"/>
</dbReference>
<dbReference type="PANTHER" id="PTHR10744:SF1">
    <property type="entry name" value="SMALL RIBOSOMAL SUBUNIT PROTEIN US17M"/>
    <property type="match status" value="1"/>
</dbReference>
<dbReference type="Pfam" id="PF00366">
    <property type="entry name" value="Ribosomal_S17"/>
    <property type="match status" value="1"/>
</dbReference>
<dbReference type="PRINTS" id="PR00973">
    <property type="entry name" value="RIBOSOMALS17"/>
</dbReference>
<dbReference type="SUPFAM" id="SSF50249">
    <property type="entry name" value="Nucleic acid-binding proteins"/>
    <property type="match status" value="1"/>
</dbReference>
<dbReference type="PROSITE" id="PS00056">
    <property type="entry name" value="RIBOSOMAL_S17"/>
    <property type="match status" value="1"/>
</dbReference>
<name>RS17_MYCPU</name>
<protein>
    <recommendedName>
        <fullName evidence="1">Small ribosomal subunit protein uS17</fullName>
    </recommendedName>
    <alternativeName>
        <fullName evidence="2">30S ribosomal protein S17</fullName>
    </alternativeName>
</protein>
<reference key="1">
    <citation type="journal article" date="2001" name="Nucleic Acids Res.">
        <title>The complete genome sequence of the murine respiratory pathogen Mycoplasma pulmonis.</title>
        <authorList>
            <person name="Chambaud I."/>
            <person name="Heilig R."/>
            <person name="Ferris S."/>
            <person name="Barbe V."/>
            <person name="Samson D."/>
            <person name="Galisson F."/>
            <person name="Moszer I."/>
            <person name="Dybvig K."/>
            <person name="Wroblewski H."/>
            <person name="Viari A."/>
            <person name="Rocha E.P.C."/>
            <person name="Blanchard A."/>
        </authorList>
    </citation>
    <scope>NUCLEOTIDE SEQUENCE [LARGE SCALE GENOMIC DNA]</scope>
    <source>
        <strain>UAB CTIP</strain>
    </source>
</reference>
<feature type="chain" id="PRO_0000233514" description="Small ribosomal subunit protein uS17">
    <location>
        <begin position="1"/>
        <end position="88"/>
    </location>
</feature>